<reference key="1">
    <citation type="journal article" date="2003" name="Proc. Natl. Acad. Sci. U.S.A.">
        <title>The complete genome sequence of Chromobacterium violaceum reveals remarkable and exploitable bacterial adaptability.</title>
        <authorList>
            <person name="Vasconcelos A.T.R."/>
            <person name="de Almeida D.F."/>
            <person name="Hungria M."/>
            <person name="Guimaraes C.T."/>
            <person name="Antonio R.V."/>
            <person name="Almeida F.C."/>
            <person name="de Almeida L.G.P."/>
            <person name="de Almeida R."/>
            <person name="Alves-Gomes J.A."/>
            <person name="Andrade E.M."/>
            <person name="Araripe J."/>
            <person name="de Araujo M.F.F."/>
            <person name="Astolfi-Filho S."/>
            <person name="Azevedo V."/>
            <person name="Baptista A.J."/>
            <person name="Bataus L.A.M."/>
            <person name="Batista J.S."/>
            <person name="Belo A."/>
            <person name="van den Berg C."/>
            <person name="Bogo M."/>
            <person name="Bonatto S."/>
            <person name="Bordignon J."/>
            <person name="Brigido M.M."/>
            <person name="Brito C.A."/>
            <person name="Brocchi M."/>
            <person name="Burity H.A."/>
            <person name="Camargo A.A."/>
            <person name="Cardoso D.D.P."/>
            <person name="Carneiro N.P."/>
            <person name="Carraro D.M."/>
            <person name="Carvalho C.M.B."/>
            <person name="Cascardo J.C.M."/>
            <person name="Cavada B.S."/>
            <person name="Chueire L.M.O."/>
            <person name="Creczynski-Pasa T.B."/>
            <person name="Cunha-Junior N.C."/>
            <person name="Fagundes N."/>
            <person name="Falcao C.L."/>
            <person name="Fantinatti F."/>
            <person name="Farias I.P."/>
            <person name="Felipe M.S.S."/>
            <person name="Ferrari L.P."/>
            <person name="Ferro J.A."/>
            <person name="Ferro M.I.T."/>
            <person name="Franco G.R."/>
            <person name="Freitas N.S.A."/>
            <person name="Furlan L.R."/>
            <person name="Gazzinelli R.T."/>
            <person name="Gomes E.A."/>
            <person name="Goncalves P.R."/>
            <person name="Grangeiro T.B."/>
            <person name="Grattapaglia D."/>
            <person name="Grisard E.C."/>
            <person name="Hanna E.S."/>
            <person name="Jardim S.N."/>
            <person name="Laurino J."/>
            <person name="Leoi L.C.T."/>
            <person name="Lima L.F.A."/>
            <person name="Loureiro M.F."/>
            <person name="Lyra M.C.C.P."/>
            <person name="Madeira H.M.F."/>
            <person name="Manfio G.P."/>
            <person name="Maranhao A.Q."/>
            <person name="Martins W.S."/>
            <person name="di Mauro S.M.Z."/>
            <person name="de Medeiros S.R.B."/>
            <person name="Meissner R.V."/>
            <person name="Moreira M.A.M."/>
            <person name="Nascimento F.F."/>
            <person name="Nicolas M.F."/>
            <person name="Oliveira J.G."/>
            <person name="Oliveira S.C."/>
            <person name="Paixao R.F.C."/>
            <person name="Parente J.A."/>
            <person name="Pedrosa F.O."/>
            <person name="Pena S.D.J."/>
            <person name="Pereira J.O."/>
            <person name="Pereira M."/>
            <person name="Pinto L.S.R.C."/>
            <person name="Pinto L.S."/>
            <person name="Porto J.I.R."/>
            <person name="Potrich D.P."/>
            <person name="Ramalho-Neto C.E."/>
            <person name="Reis A.M.M."/>
            <person name="Rigo L.U."/>
            <person name="Rondinelli E."/>
            <person name="Santos E.B.P."/>
            <person name="Santos F.R."/>
            <person name="Schneider M.P.C."/>
            <person name="Seuanez H.N."/>
            <person name="Silva A.M.R."/>
            <person name="da Silva A.L.C."/>
            <person name="Silva D.W."/>
            <person name="Silva R."/>
            <person name="Simoes I.C."/>
            <person name="Simon D."/>
            <person name="Soares C.M.A."/>
            <person name="Soares R.B.A."/>
            <person name="Souza E.M."/>
            <person name="Souza K.R.L."/>
            <person name="Souza R.C."/>
            <person name="Steffens M.B.R."/>
            <person name="Steindel M."/>
            <person name="Teixeira S.R."/>
            <person name="Urmenyi T."/>
            <person name="Vettore A."/>
            <person name="Wassem R."/>
            <person name="Zaha A."/>
            <person name="Simpson A.J.G."/>
        </authorList>
    </citation>
    <scope>NUCLEOTIDE SEQUENCE [LARGE SCALE GENOMIC DNA]</scope>
    <source>
        <strain>ATCC 12472 / DSM 30191 / JCM 1249 / CCUG 213 / NBRC 12614 / NCIMB 9131 / NCTC 9757 / MK</strain>
    </source>
</reference>
<proteinExistence type="inferred from homology"/>
<feature type="chain" id="PRO_0000188868" description="tRNA modification GTPase MnmE">
    <location>
        <begin position="1"/>
        <end position="450"/>
    </location>
</feature>
<feature type="domain" description="TrmE-type G">
    <location>
        <begin position="219"/>
        <end position="376"/>
    </location>
</feature>
<feature type="binding site" evidence="1">
    <location>
        <position position="26"/>
    </location>
    <ligand>
        <name>(6S)-5-formyl-5,6,7,8-tetrahydrofolate</name>
        <dbReference type="ChEBI" id="CHEBI:57457"/>
    </ligand>
</feature>
<feature type="binding site" evidence="1">
    <location>
        <position position="84"/>
    </location>
    <ligand>
        <name>(6S)-5-formyl-5,6,7,8-tetrahydrofolate</name>
        <dbReference type="ChEBI" id="CHEBI:57457"/>
    </ligand>
</feature>
<feature type="binding site" evidence="1">
    <location>
        <position position="123"/>
    </location>
    <ligand>
        <name>(6S)-5-formyl-5,6,7,8-tetrahydrofolate</name>
        <dbReference type="ChEBI" id="CHEBI:57457"/>
    </ligand>
</feature>
<feature type="binding site" evidence="1">
    <location>
        <begin position="229"/>
        <end position="234"/>
    </location>
    <ligand>
        <name>GTP</name>
        <dbReference type="ChEBI" id="CHEBI:37565"/>
    </ligand>
</feature>
<feature type="binding site" evidence="1">
    <location>
        <position position="229"/>
    </location>
    <ligand>
        <name>K(+)</name>
        <dbReference type="ChEBI" id="CHEBI:29103"/>
    </ligand>
</feature>
<feature type="binding site" evidence="1">
    <location>
        <position position="233"/>
    </location>
    <ligand>
        <name>Mg(2+)</name>
        <dbReference type="ChEBI" id="CHEBI:18420"/>
    </ligand>
</feature>
<feature type="binding site" evidence="1">
    <location>
        <begin position="248"/>
        <end position="254"/>
    </location>
    <ligand>
        <name>GTP</name>
        <dbReference type="ChEBI" id="CHEBI:37565"/>
    </ligand>
</feature>
<feature type="binding site" evidence="1">
    <location>
        <position position="248"/>
    </location>
    <ligand>
        <name>K(+)</name>
        <dbReference type="ChEBI" id="CHEBI:29103"/>
    </ligand>
</feature>
<feature type="binding site" evidence="1">
    <location>
        <position position="250"/>
    </location>
    <ligand>
        <name>K(+)</name>
        <dbReference type="ChEBI" id="CHEBI:29103"/>
    </ligand>
</feature>
<feature type="binding site" evidence="1">
    <location>
        <position position="253"/>
    </location>
    <ligand>
        <name>K(+)</name>
        <dbReference type="ChEBI" id="CHEBI:29103"/>
    </ligand>
</feature>
<feature type="binding site" evidence="1">
    <location>
        <position position="254"/>
    </location>
    <ligand>
        <name>Mg(2+)</name>
        <dbReference type="ChEBI" id="CHEBI:18420"/>
    </ligand>
</feature>
<feature type="binding site" evidence="1">
    <location>
        <begin position="273"/>
        <end position="276"/>
    </location>
    <ligand>
        <name>GTP</name>
        <dbReference type="ChEBI" id="CHEBI:37565"/>
    </ligand>
</feature>
<feature type="binding site" evidence="1">
    <location>
        <begin position="357"/>
        <end position="359"/>
    </location>
    <ligand>
        <name>GTP</name>
        <dbReference type="ChEBI" id="CHEBI:37565"/>
    </ligand>
</feature>
<feature type="binding site" evidence="1">
    <location>
        <position position="450"/>
    </location>
    <ligand>
        <name>(6S)-5-formyl-5,6,7,8-tetrahydrofolate</name>
        <dbReference type="ChEBI" id="CHEBI:57457"/>
    </ligand>
</feature>
<keyword id="KW-0963">Cytoplasm</keyword>
<keyword id="KW-0342">GTP-binding</keyword>
<keyword id="KW-0378">Hydrolase</keyword>
<keyword id="KW-0460">Magnesium</keyword>
<keyword id="KW-0479">Metal-binding</keyword>
<keyword id="KW-0547">Nucleotide-binding</keyword>
<keyword id="KW-0630">Potassium</keyword>
<keyword id="KW-1185">Reference proteome</keyword>
<keyword id="KW-0819">tRNA processing</keyword>
<accession>Q7NPT9</accession>
<protein>
    <recommendedName>
        <fullName evidence="1">tRNA modification GTPase MnmE</fullName>
        <ecNumber evidence="1">3.6.-.-</ecNumber>
    </recommendedName>
</protein>
<gene>
    <name evidence="1" type="primary">mnmE</name>
    <name evidence="1" type="synonym">trmE</name>
    <name type="ordered locus">CV_4403</name>
</gene>
<organism>
    <name type="scientific">Chromobacterium violaceum (strain ATCC 12472 / DSM 30191 / JCM 1249 / CCUG 213 / NBRC 12614 / NCIMB 9131 / NCTC 9757 / MK)</name>
    <dbReference type="NCBI Taxonomy" id="243365"/>
    <lineage>
        <taxon>Bacteria</taxon>
        <taxon>Pseudomonadati</taxon>
        <taxon>Pseudomonadota</taxon>
        <taxon>Betaproteobacteria</taxon>
        <taxon>Neisseriales</taxon>
        <taxon>Chromobacteriaceae</taxon>
        <taxon>Chromobacterium</taxon>
    </lineage>
</organism>
<evidence type="ECO:0000255" key="1">
    <source>
        <dbReference type="HAMAP-Rule" id="MF_00379"/>
    </source>
</evidence>
<dbReference type="EC" id="3.6.-.-" evidence="1"/>
<dbReference type="EMBL" id="AE016825">
    <property type="protein sequence ID" value="AAQ62062.1"/>
    <property type="molecule type" value="Genomic_DNA"/>
</dbReference>
<dbReference type="RefSeq" id="WP_011137949.1">
    <property type="nucleotide sequence ID" value="NC_005085.1"/>
</dbReference>
<dbReference type="SMR" id="Q7NPT9"/>
<dbReference type="STRING" id="243365.CV_4403"/>
<dbReference type="KEGG" id="cvi:CV_4403"/>
<dbReference type="eggNOG" id="COG0486">
    <property type="taxonomic scope" value="Bacteria"/>
</dbReference>
<dbReference type="HOGENOM" id="CLU_019624_4_1_4"/>
<dbReference type="OrthoDB" id="9805918at2"/>
<dbReference type="Proteomes" id="UP000001424">
    <property type="component" value="Chromosome"/>
</dbReference>
<dbReference type="GO" id="GO:0005829">
    <property type="term" value="C:cytosol"/>
    <property type="evidence" value="ECO:0007669"/>
    <property type="project" value="TreeGrafter"/>
</dbReference>
<dbReference type="GO" id="GO:0005525">
    <property type="term" value="F:GTP binding"/>
    <property type="evidence" value="ECO:0007669"/>
    <property type="project" value="UniProtKB-UniRule"/>
</dbReference>
<dbReference type="GO" id="GO:0003924">
    <property type="term" value="F:GTPase activity"/>
    <property type="evidence" value="ECO:0007669"/>
    <property type="project" value="UniProtKB-UniRule"/>
</dbReference>
<dbReference type="GO" id="GO:0046872">
    <property type="term" value="F:metal ion binding"/>
    <property type="evidence" value="ECO:0007669"/>
    <property type="project" value="UniProtKB-KW"/>
</dbReference>
<dbReference type="GO" id="GO:0030488">
    <property type="term" value="P:tRNA methylation"/>
    <property type="evidence" value="ECO:0007669"/>
    <property type="project" value="TreeGrafter"/>
</dbReference>
<dbReference type="GO" id="GO:0002098">
    <property type="term" value="P:tRNA wobble uridine modification"/>
    <property type="evidence" value="ECO:0007669"/>
    <property type="project" value="TreeGrafter"/>
</dbReference>
<dbReference type="CDD" id="cd04164">
    <property type="entry name" value="trmE"/>
    <property type="match status" value="1"/>
</dbReference>
<dbReference type="CDD" id="cd14858">
    <property type="entry name" value="TrmE_N"/>
    <property type="match status" value="1"/>
</dbReference>
<dbReference type="Gene3D" id="3.40.50.300">
    <property type="entry name" value="P-loop containing nucleotide triphosphate hydrolases"/>
    <property type="match status" value="1"/>
</dbReference>
<dbReference type="Gene3D" id="3.30.1360.120">
    <property type="entry name" value="Probable tRNA modification gtpase trme, domain 1"/>
    <property type="match status" value="1"/>
</dbReference>
<dbReference type="Gene3D" id="1.20.120.430">
    <property type="entry name" value="tRNA modification GTPase MnmE domain 2"/>
    <property type="match status" value="1"/>
</dbReference>
<dbReference type="HAMAP" id="MF_00379">
    <property type="entry name" value="GTPase_MnmE"/>
    <property type="match status" value="1"/>
</dbReference>
<dbReference type="InterPro" id="IPR031168">
    <property type="entry name" value="G_TrmE"/>
</dbReference>
<dbReference type="InterPro" id="IPR006073">
    <property type="entry name" value="GTP-bd"/>
</dbReference>
<dbReference type="InterPro" id="IPR018948">
    <property type="entry name" value="GTP-bd_TrmE_N"/>
</dbReference>
<dbReference type="InterPro" id="IPR004520">
    <property type="entry name" value="GTPase_MnmE"/>
</dbReference>
<dbReference type="InterPro" id="IPR027368">
    <property type="entry name" value="MnmE_dom2"/>
</dbReference>
<dbReference type="InterPro" id="IPR025867">
    <property type="entry name" value="MnmE_helical"/>
</dbReference>
<dbReference type="InterPro" id="IPR027417">
    <property type="entry name" value="P-loop_NTPase"/>
</dbReference>
<dbReference type="InterPro" id="IPR005225">
    <property type="entry name" value="Small_GTP-bd"/>
</dbReference>
<dbReference type="InterPro" id="IPR027266">
    <property type="entry name" value="TrmE/GcvT_dom1"/>
</dbReference>
<dbReference type="NCBIfam" id="TIGR00450">
    <property type="entry name" value="mnmE_trmE_thdF"/>
    <property type="match status" value="1"/>
</dbReference>
<dbReference type="NCBIfam" id="NF003661">
    <property type="entry name" value="PRK05291.1-3"/>
    <property type="match status" value="1"/>
</dbReference>
<dbReference type="NCBIfam" id="TIGR00231">
    <property type="entry name" value="small_GTP"/>
    <property type="match status" value="1"/>
</dbReference>
<dbReference type="PANTHER" id="PTHR42714">
    <property type="entry name" value="TRNA MODIFICATION GTPASE GTPBP3"/>
    <property type="match status" value="1"/>
</dbReference>
<dbReference type="PANTHER" id="PTHR42714:SF2">
    <property type="entry name" value="TRNA MODIFICATION GTPASE GTPBP3, MITOCHONDRIAL"/>
    <property type="match status" value="1"/>
</dbReference>
<dbReference type="Pfam" id="PF01926">
    <property type="entry name" value="MMR_HSR1"/>
    <property type="match status" value="1"/>
</dbReference>
<dbReference type="Pfam" id="PF12631">
    <property type="entry name" value="MnmE_helical"/>
    <property type="match status" value="1"/>
</dbReference>
<dbReference type="Pfam" id="PF10396">
    <property type="entry name" value="TrmE_N"/>
    <property type="match status" value="1"/>
</dbReference>
<dbReference type="SMART" id="SM00173">
    <property type="entry name" value="RAS"/>
    <property type="match status" value="1"/>
</dbReference>
<dbReference type="SUPFAM" id="SSF52540">
    <property type="entry name" value="P-loop containing nucleoside triphosphate hydrolases"/>
    <property type="match status" value="1"/>
</dbReference>
<dbReference type="PROSITE" id="PS51709">
    <property type="entry name" value="G_TRME"/>
    <property type="match status" value="1"/>
</dbReference>
<name>MNME_CHRVO</name>
<sequence>MNLSYTPATICAVATAPGRGGVGVIRVSGKDLLPFAQAISGGKTPKPRYATYTDFFDAHGQALDNGLLLFFPGPNSFTGEDVIELQGHGGPVVLKMLLARCVELGARLAEPGEFTKRAFLNDKLDLAQAESVADLIDASSETAARSALKSLKGAFSREVHGLVDELINLRMLVEATLDFPEEEIDFLKQADAIGRLRRLRAQLVGVQATAKQGAILREGMHVVLVGQPNVGKSSLMNALAGDDIAIVTDIAGTTRDTVREEIVIDGVPVHIIDTAGLRDTDDVVEKIGIERTWQAVERADLALLLVDSREGLTAEVQSILERLPPALPRVQVFNKVDLSGEAAGLAEQDGHPLVRLSARTHDGVDILKAKLLEMIGYSGADEGVFLARQRHLDAIARAADHLELAEADWEQVEIFAEELRMAQNALSEITGEFSADDLLGVIFSRFCIGK</sequence>
<comment type="function">
    <text evidence="1">Exhibits a very high intrinsic GTPase hydrolysis rate. Involved in the addition of a carboxymethylaminomethyl (cmnm) group at the wobble position (U34) of certain tRNAs, forming tRNA-cmnm(5)s(2)U34.</text>
</comment>
<comment type="cofactor">
    <cofactor evidence="1">
        <name>K(+)</name>
        <dbReference type="ChEBI" id="CHEBI:29103"/>
    </cofactor>
    <text evidence="1">Binds 1 potassium ion per subunit.</text>
</comment>
<comment type="subunit">
    <text evidence="1">Homodimer. Heterotetramer of two MnmE and two MnmG subunits.</text>
</comment>
<comment type="subcellular location">
    <subcellularLocation>
        <location evidence="1">Cytoplasm</location>
    </subcellularLocation>
</comment>
<comment type="similarity">
    <text evidence="1">Belongs to the TRAFAC class TrmE-Era-EngA-EngB-Septin-like GTPase superfamily. TrmE GTPase family.</text>
</comment>